<comment type="function">
    <text evidence="1">Specifically methylates the pseudouridine at position 1915 (m3Psi1915) in 23S rRNA.</text>
</comment>
<comment type="catalytic activity">
    <reaction evidence="1">
        <text>pseudouridine(1915) in 23S rRNA + S-adenosyl-L-methionine = N(3)-methylpseudouridine(1915) in 23S rRNA + S-adenosyl-L-homocysteine + H(+)</text>
        <dbReference type="Rhea" id="RHEA:42752"/>
        <dbReference type="Rhea" id="RHEA-COMP:10221"/>
        <dbReference type="Rhea" id="RHEA-COMP:10222"/>
        <dbReference type="ChEBI" id="CHEBI:15378"/>
        <dbReference type="ChEBI" id="CHEBI:57856"/>
        <dbReference type="ChEBI" id="CHEBI:59789"/>
        <dbReference type="ChEBI" id="CHEBI:65314"/>
        <dbReference type="ChEBI" id="CHEBI:74486"/>
        <dbReference type="EC" id="2.1.1.177"/>
    </reaction>
</comment>
<comment type="subunit">
    <text evidence="1">Homodimer.</text>
</comment>
<comment type="subcellular location">
    <subcellularLocation>
        <location evidence="1">Cytoplasm</location>
    </subcellularLocation>
</comment>
<comment type="similarity">
    <text evidence="1">Belongs to the RNA methyltransferase RlmH family.</text>
</comment>
<dbReference type="EC" id="2.1.1.177" evidence="1"/>
<dbReference type="EMBL" id="CP000930">
    <property type="protein sequence ID" value="ABZ83576.1"/>
    <property type="molecule type" value="Genomic_DNA"/>
</dbReference>
<dbReference type="RefSeq" id="WP_012282104.1">
    <property type="nucleotide sequence ID" value="NC_010337.2"/>
</dbReference>
<dbReference type="SMR" id="B0TA39"/>
<dbReference type="STRING" id="498761.HM1_0992"/>
<dbReference type="KEGG" id="hmo:HM1_0992"/>
<dbReference type="eggNOG" id="COG1576">
    <property type="taxonomic scope" value="Bacteria"/>
</dbReference>
<dbReference type="HOGENOM" id="CLU_100552_0_0_9"/>
<dbReference type="Proteomes" id="UP000008550">
    <property type="component" value="Chromosome"/>
</dbReference>
<dbReference type="GO" id="GO:0005737">
    <property type="term" value="C:cytoplasm"/>
    <property type="evidence" value="ECO:0007669"/>
    <property type="project" value="UniProtKB-SubCell"/>
</dbReference>
<dbReference type="GO" id="GO:0070038">
    <property type="term" value="F:rRNA (pseudouridine-N3-)-methyltransferase activity"/>
    <property type="evidence" value="ECO:0007669"/>
    <property type="project" value="UniProtKB-UniRule"/>
</dbReference>
<dbReference type="CDD" id="cd18081">
    <property type="entry name" value="RlmH-like"/>
    <property type="match status" value="1"/>
</dbReference>
<dbReference type="Gene3D" id="3.40.1280.10">
    <property type="match status" value="1"/>
</dbReference>
<dbReference type="HAMAP" id="MF_00658">
    <property type="entry name" value="23SrRNA_methyltr_H"/>
    <property type="match status" value="1"/>
</dbReference>
<dbReference type="InterPro" id="IPR029028">
    <property type="entry name" value="Alpha/beta_knot_MTases"/>
</dbReference>
<dbReference type="InterPro" id="IPR003742">
    <property type="entry name" value="RlmH-like"/>
</dbReference>
<dbReference type="InterPro" id="IPR029026">
    <property type="entry name" value="tRNA_m1G_MTases_N"/>
</dbReference>
<dbReference type="NCBIfam" id="NF000985">
    <property type="entry name" value="PRK00103.1-3"/>
    <property type="match status" value="1"/>
</dbReference>
<dbReference type="NCBIfam" id="TIGR00246">
    <property type="entry name" value="tRNA_RlmH_YbeA"/>
    <property type="match status" value="1"/>
</dbReference>
<dbReference type="PANTHER" id="PTHR33603">
    <property type="entry name" value="METHYLTRANSFERASE"/>
    <property type="match status" value="1"/>
</dbReference>
<dbReference type="PANTHER" id="PTHR33603:SF1">
    <property type="entry name" value="RIBOSOMAL RNA LARGE SUBUNIT METHYLTRANSFERASE H"/>
    <property type="match status" value="1"/>
</dbReference>
<dbReference type="Pfam" id="PF02590">
    <property type="entry name" value="SPOUT_MTase"/>
    <property type="match status" value="1"/>
</dbReference>
<dbReference type="PIRSF" id="PIRSF004505">
    <property type="entry name" value="MT_bac"/>
    <property type="match status" value="1"/>
</dbReference>
<dbReference type="SUPFAM" id="SSF75217">
    <property type="entry name" value="alpha/beta knot"/>
    <property type="match status" value="1"/>
</dbReference>
<accession>B0TA39</accession>
<gene>
    <name evidence="1" type="primary">rlmH</name>
    <name type="ordered locus">Helmi_09510</name>
    <name type="ORF">HM1_0992</name>
</gene>
<keyword id="KW-0963">Cytoplasm</keyword>
<keyword id="KW-0489">Methyltransferase</keyword>
<keyword id="KW-1185">Reference proteome</keyword>
<keyword id="KW-0698">rRNA processing</keyword>
<keyword id="KW-0949">S-adenosyl-L-methionine</keyword>
<keyword id="KW-0808">Transferase</keyword>
<evidence type="ECO:0000255" key="1">
    <source>
        <dbReference type="HAMAP-Rule" id="MF_00658"/>
    </source>
</evidence>
<sequence length="161" mass="18465">MLHIRIVAVGKLKEKYLKEGLREYIKRLGAYSRLEIIEVPDEKVPDKPSDTEAALIKRKEGDRLLAAAGDKDYIGVALDPRGEMWSTEDLADKMRRWELYGPNLVVFFIGGTLGLSKEVHAVCKAKWSLSRLTFPHQLVRLILLEQVYRGCKVNRGETYHR</sequence>
<feature type="chain" id="PRO_0000366610" description="Ribosomal RNA large subunit methyltransferase H">
    <location>
        <begin position="1"/>
        <end position="161"/>
    </location>
</feature>
<feature type="binding site" evidence="1">
    <location>
        <position position="78"/>
    </location>
    <ligand>
        <name>S-adenosyl-L-methionine</name>
        <dbReference type="ChEBI" id="CHEBI:59789"/>
    </ligand>
</feature>
<feature type="binding site" evidence="1">
    <location>
        <position position="110"/>
    </location>
    <ligand>
        <name>S-adenosyl-L-methionine</name>
        <dbReference type="ChEBI" id="CHEBI:59789"/>
    </ligand>
</feature>
<feature type="binding site" evidence="1">
    <location>
        <begin position="129"/>
        <end position="134"/>
    </location>
    <ligand>
        <name>S-adenosyl-L-methionine</name>
        <dbReference type="ChEBI" id="CHEBI:59789"/>
    </ligand>
</feature>
<protein>
    <recommendedName>
        <fullName evidence="1">Ribosomal RNA large subunit methyltransferase H</fullName>
        <ecNumber evidence="1">2.1.1.177</ecNumber>
    </recommendedName>
    <alternativeName>
        <fullName evidence="1">23S rRNA (pseudouridine1915-N3)-methyltransferase</fullName>
    </alternativeName>
    <alternativeName>
        <fullName evidence="1">23S rRNA m3Psi1915 methyltransferase</fullName>
    </alternativeName>
    <alternativeName>
        <fullName evidence="1">rRNA (pseudouridine-N3-)-methyltransferase RlmH</fullName>
    </alternativeName>
</protein>
<proteinExistence type="inferred from homology"/>
<organism>
    <name type="scientific">Heliobacterium modesticaldum (strain ATCC 51547 / Ice1)</name>
    <dbReference type="NCBI Taxonomy" id="498761"/>
    <lineage>
        <taxon>Bacteria</taxon>
        <taxon>Bacillati</taxon>
        <taxon>Bacillota</taxon>
        <taxon>Clostridia</taxon>
        <taxon>Eubacteriales</taxon>
        <taxon>Heliobacteriaceae</taxon>
        <taxon>Heliomicrobium</taxon>
    </lineage>
</organism>
<name>RLMH_HELMI</name>
<reference key="1">
    <citation type="journal article" date="2008" name="J. Bacteriol.">
        <title>The genome of Heliobacterium modesticaldum, a phototrophic representative of the Firmicutes containing the simplest photosynthetic apparatus.</title>
        <authorList>
            <person name="Sattley W.M."/>
            <person name="Madigan M.T."/>
            <person name="Swingley W.D."/>
            <person name="Cheung P.C."/>
            <person name="Clocksin K.M."/>
            <person name="Conrad A.L."/>
            <person name="Dejesa L.C."/>
            <person name="Honchak B.M."/>
            <person name="Jung D.O."/>
            <person name="Karbach L.E."/>
            <person name="Kurdoglu A."/>
            <person name="Lahiri S."/>
            <person name="Mastrian S.D."/>
            <person name="Page L.E."/>
            <person name="Taylor H.L."/>
            <person name="Wang Z.T."/>
            <person name="Raymond J."/>
            <person name="Chen M."/>
            <person name="Blankenship R.E."/>
            <person name="Touchman J.W."/>
        </authorList>
    </citation>
    <scope>NUCLEOTIDE SEQUENCE [LARGE SCALE GENOMIC DNA]</scope>
    <source>
        <strain>ATCC 51547 / Ice1</strain>
    </source>
</reference>